<comment type="function">
    <text evidence="5 7">DNA- and RNA-binding protein, involved in several nuclear processes such as pre-mRNA splicing, apoptosis and transcription regulation (Probable). Ensures the correct splicing of genes involved in immunity to promote longevity in response to infection by pathogenic bacteria such as S.aureus (PubMed:32538777).</text>
</comment>
<comment type="subcellular location">
    <subcellularLocation>
        <location evidence="7">Nucleus</location>
    </subcellularLocation>
</comment>
<comment type="alternative products">
    <event type="alternative splicing"/>
    <isoform>
        <id>Q9N3S4-1</id>
        <name evidence="10">b</name>
        <sequence type="displayed"/>
    </isoform>
    <isoform>
        <id>Q9N3S4-2</id>
        <name evidence="9">a</name>
        <sequence type="described" ref="VSP_060862 VSP_060863"/>
    </isoform>
    <isoform>
        <id>Q9N3S4-3</id>
        <name evidence="11">c</name>
        <sequence type="described" ref="VSP_060861 VSP_060864"/>
    </isoform>
</comment>
<comment type="domain">
    <text evidence="1">The third RNA recognition motif, called PUMP domain, is atypical and may rather mediate homodimerization and/or protein-protein interactions.</text>
</comment>
<comment type="disruption phenotype">
    <text evidence="5">RNAi-mediated knockdown increases survival following infection by pathogenic bacteria S.aureus (PubMed:32538777). RNAi-mediated knockdown impairs the splicing of genes such as prg-2 and tos-1 following infection by S.aureus (PubMed:32538777). RNAi-mediated knockdown induces the expression of nlp-34, lys-3, irg-2, irg-1, M01G12.9, fmo-2 and cyp-37B1 under non-infected conditions (PubMed:32538777). RNAi-mediated knockdown increases the phosphorylation of pmk-1 (PubMed:32538777).</text>
</comment>
<comment type="similarity">
    <text evidence="6">Belongs to the RRM half pint family.</text>
</comment>
<keyword id="KW-0025">Alternative splicing</keyword>
<keyword id="KW-0238">DNA-binding</keyword>
<keyword id="KW-0507">mRNA processing</keyword>
<keyword id="KW-0508">mRNA splicing</keyword>
<keyword id="KW-0539">Nucleus</keyword>
<keyword id="KW-1185">Reference proteome</keyword>
<keyword id="KW-0678">Repressor</keyword>
<keyword id="KW-0687">Ribonucleoprotein</keyword>
<keyword id="KW-0694">RNA-binding</keyword>
<keyword id="KW-0804">Transcription</keyword>
<keyword id="KW-0805">Transcription regulation</keyword>
<name>PUF60_CAEEL</name>
<sequence>MEENSADIENRPVAAFRPAVSVPMPVLPQDGEVFVGPGGKKDAQKIGLGLSKLSSKRKDDIQMAKKYAMDISIKQILLRQQKQQQENQQRQQMYSQALSIMSRIYVGSISFEIREDMLRRAFDPFGPIKSINMSWDPATGHHKTFAFVEYEVPEAALLAQESMNGQMLGGRNLKVNSMMFQEMRLPQNMPQAQPIIDMVQKDAKKYFRVYVSSVHPDLSETDLKSVFEAFGEIVKCQLARAPTGRGHRGFGYLEFNNLTSQSEAIAGMNMFDLGGQYLRVGKCVTPPDALTYLQPASVSAIPASVSVACAAITAKVMAAEAAAGSSPKTPSESGGSRAASPAPRAQSPATPSSSLPTDIENKAVISSPKKEPEEIEVPPLPPSAPDVVKDEPMEIEEEEEYTIPEEKPKPVAIVPPPGLAIPSLVAPPGLIAPTEIGIVVPNPSFLAQQQQKIEEKIEEEEEARTERVKLSTSQRKKMKREKLNQMTFEEKMAQVLGQQKAVQNQRMADPVTFGALDDTVAWKDPSNEDQTSEDGKMLAIMGPGRGGDNVASMALALMDGGSSLMLANNAKAKEAAAALALEPKKKKKVKEGKKIQPKLNTAQALAAAAKAGEMSDALKNEVMNSEDASLASQEGLEIRGNDARHLLMTKLMRTNRSNVIVLRNMVTPQDIDEFLEGEIREECGKYGNVIDVVIANFASSGLVKIFVKYSDSMQVDRAKAALDGRFFGGNTVKAEAYDQILFDHADYTG</sequence>
<gene>
    <name evidence="10" type="primary">rnp-6</name>
    <name evidence="10" type="ORF">Y47G6A.20</name>
</gene>
<dbReference type="EMBL" id="BX284601">
    <property type="protein sequence ID" value="CCD72564.1"/>
    <property type="molecule type" value="Genomic_DNA"/>
</dbReference>
<dbReference type="EMBL" id="BX284601">
    <property type="protein sequence ID" value="CCD72565.1"/>
    <property type="molecule type" value="Genomic_DNA"/>
</dbReference>
<dbReference type="EMBL" id="BX284601">
    <property type="protein sequence ID" value="CCD72566.1"/>
    <property type="molecule type" value="Genomic_DNA"/>
</dbReference>
<dbReference type="RefSeq" id="NP_001360094.1">
    <molecule id="Q9N3S4-2"/>
    <property type="nucleotide sequence ID" value="NM_001373813.2"/>
</dbReference>
<dbReference type="RefSeq" id="NP_491176.1">
    <molecule id="Q9N3S4-1"/>
    <property type="nucleotide sequence ID" value="NM_058775.8"/>
</dbReference>
<dbReference type="RefSeq" id="NP_491177.1">
    <property type="nucleotide sequence ID" value="NM_058776.4"/>
</dbReference>
<dbReference type="RefSeq" id="NP_740829.1">
    <molecule id="Q9N3S4-3"/>
    <property type="nucleotide sequence ID" value="NM_170843.5"/>
</dbReference>
<dbReference type="SMR" id="Q9N3S4"/>
<dbReference type="FunCoup" id="Q9N3S4">
    <property type="interactions" value="2933"/>
</dbReference>
<dbReference type="STRING" id="6239.Y47G6A.20b.1"/>
<dbReference type="PaxDb" id="6239-Y47G6A.20b"/>
<dbReference type="PeptideAtlas" id="Q9N3S4"/>
<dbReference type="EnsemblMetazoa" id="Y47G6A.20a.1">
    <molecule id="Q9N3S4-2"/>
    <property type="protein sequence ID" value="Y47G6A.20a.1"/>
    <property type="gene ID" value="WBGene00004389"/>
</dbReference>
<dbReference type="EnsemblMetazoa" id="Y47G6A.20b.1">
    <molecule id="Q9N3S4-1"/>
    <property type="protein sequence ID" value="Y47G6A.20b.1"/>
    <property type="gene ID" value="WBGene00004389"/>
</dbReference>
<dbReference type="EnsemblMetazoa" id="Y47G6A.20c.1">
    <molecule id="Q9N3S4-3"/>
    <property type="protein sequence ID" value="Y47G6A.20c.1"/>
    <property type="gene ID" value="WBGene00004389"/>
</dbReference>
<dbReference type="GeneID" id="171922"/>
<dbReference type="KEGG" id="cel:CELE_Y47G6A.20"/>
<dbReference type="UCSC" id="Y47G6A.20b">
    <property type="organism name" value="c. elegans"/>
</dbReference>
<dbReference type="AGR" id="WB:WBGene00004389"/>
<dbReference type="CTD" id="171922"/>
<dbReference type="WormBase" id="Y47G6A.20a">
    <molecule id="Q9N3S4-2"/>
    <property type="protein sequence ID" value="CE24365"/>
    <property type="gene ID" value="WBGene00004389"/>
    <property type="gene designation" value="rnp-6"/>
</dbReference>
<dbReference type="WormBase" id="Y47G6A.20b">
    <molecule id="Q9N3S4-1"/>
    <property type="protein sequence ID" value="CE24366"/>
    <property type="gene ID" value="WBGene00004389"/>
    <property type="gene designation" value="rnp-6"/>
</dbReference>
<dbReference type="WormBase" id="Y47G6A.20c">
    <molecule id="Q9N3S4-3"/>
    <property type="protein sequence ID" value="CE31375"/>
    <property type="gene ID" value="WBGene00004389"/>
    <property type="gene designation" value="rnp-6"/>
</dbReference>
<dbReference type="eggNOG" id="KOG0124">
    <property type="taxonomic scope" value="Eukaryota"/>
</dbReference>
<dbReference type="GeneTree" id="ENSGT00940000155594"/>
<dbReference type="HOGENOM" id="CLU_802228_0_0_1"/>
<dbReference type="InParanoid" id="Q9N3S4"/>
<dbReference type="OMA" id="VHTHKGY"/>
<dbReference type="OrthoDB" id="20943at2759"/>
<dbReference type="PhylomeDB" id="Q9N3S4"/>
<dbReference type="Reactome" id="R-CEL-72163">
    <property type="pathway name" value="mRNA Splicing - Major Pathway"/>
</dbReference>
<dbReference type="PRO" id="PR:Q9N3S4"/>
<dbReference type="Proteomes" id="UP000001940">
    <property type="component" value="Chromosome I"/>
</dbReference>
<dbReference type="Bgee" id="WBGene00004389">
    <property type="expression patterns" value="Expressed in embryo and 4 other cell types or tissues"/>
</dbReference>
<dbReference type="ExpressionAtlas" id="Q9N3S4">
    <property type="expression patterns" value="baseline and differential"/>
</dbReference>
<dbReference type="GO" id="GO:0005634">
    <property type="term" value="C:nucleus"/>
    <property type="evidence" value="ECO:0007669"/>
    <property type="project" value="UniProtKB-SubCell"/>
</dbReference>
<dbReference type="GO" id="GO:1990904">
    <property type="term" value="C:ribonucleoprotein complex"/>
    <property type="evidence" value="ECO:0007669"/>
    <property type="project" value="UniProtKB-KW"/>
</dbReference>
<dbReference type="GO" id="GO:0003677">
    <property type="term" value="F:DNA binding"/>
    <property type="evidence" value="ECO:0007669"/>
    <property type="project" value="UniProtKB-KW"/>
</dbReference>
<dbReference type="GO" id="GO:0003723">
    <property type="term" value="F:RNA binding"/>
    <property type="evidence" value="ECO:0007669"/>
    <property type="project" value="UniProtKB-KW"/>
</dbReference>
<dbReference type="GO" id="GO:0000380">
    <property type="term" value="P:alternative mRNA splicing, via spliceosome"/>
    <property type="evidence" value="ECO:0000318"/>
    <property type="project" value="GO_Central"/>
</dbReference>
<dbReference type="GO" id="GO:0006376">
    <property type="term" value="P:mRNA splice site recognition"/>
    <property type="evidence" value="ECO:0000318"/>
    <property type="project" value="GO_Central"/>
</dbReference>
<dbReference type="GO" id="GO:0000381">
    <property type="term" value="P:regulation of alternative mRNA splicing, via spliceosome"/>
    <property type="evidence" value="ECO:0000318"/>
    <property type="project" value="GO_Central"/>
</dbReference>
<dbReference type="CDD" id="cd12370">
    <property type="entry name" value="RRM1_PUF60"/>
    <property type="match status" value="1"/>
</dbReference>
<dbReference type="CDD" id="cd12371">
    <property type="entry name" value="RRM2_PUF60"/>
    <property type="match status" value="1"/>
</dbReference>
<dbReference type="FunFam" id="3.30.70.330:FF:000382">
    <property type="entry name" value="G-patch domain-containing protein"/>
    <property type="match status" value="1"/>
</dbReference>
<dbReference type="Gene3D" id="3.30.70.330">
    <property type="match status" value="3"/>
</dbReference>
<dbReference type="InterPro" id="IPR012677">
    <property type="entry name" value="Nucleotide-bd_a/b_plait_sf"/>
</dbReference>
<dbReference type="InterPro" id="IPR006532">
    <property type="entry name" value="PUF60-like"/>
</dbReference>
<dbReference type="InterPro" id="IPR051974">
    <property type="entry name" value="PUF60_regulator"/>
</dbReference>
<dbReference type="InterPro" id="IPR034209">
    <property type="entry name" value="PUF60_RRM1"/>
</dbReference>
<dbReference type="InterPro" id="IPR034211">
    <property type="entry name" value="PUF60_RRM2"/>
</dbReference>
<dbReference type="InterPro" id="IPR035979">
    <property type="entry name" value="RBD_domain_sf"/>
</dbReference>
<dbReference type="InterPro" id="IPR000504">
    <property type="entry name" value="RRM_dom"/>
</dbReference>
<dbReference type="InterPro" id="IPR003954">
    <property type="entry name" value="RRM_dom_euk"/>
</dbReference>
<dbReference type="NCBIfam" id="TIGR01645">
    <property type="entry name" value="half-pint"/>
    <property type="match status" value="1"/>
</dbReference>
<dbReference type="PANTHER" id="PTHR47330:SF1">
    <property type="entry name" value="POLY(U)-BINDING-SPLICING FACTOR PUF60"/>
    <property type="match status" value="1"/>
</dbReference>
<dbReference type="PANTHER" id="PTHR47330">
    <property type="entry name" value="POLY(U)-BINDING-SPLICING FACTOR PUF60-B-RELATED"/>
    <property type="match status" value="1"/>
</dbReference>
<dbReference type="Pfam" id="PF00076">
    <property type="entry name" value="RRM_1"/>
    <property type="match status" value="3"/>
</dbReference>
<dbReference type="SMART" id="SM00360">
    <property type="entry name" value="RRM"/>
    <property type="match status" value="3"/>
</dbReference>
<dbReference type="SMART" id="SM00361">
    <property type="entry name" value="RRM_1"/>
    <property type="match status" value="2"/>
</dbReference>
<dbReference type="SUPFAM" id="SSF54928">
    <property type="entry name" value="RNA-binding domain, RBD"/>
    <property type="match status" value="3"/>
</dbReference>
<dbReference type="PROSITE" id="PS50102">
    <property type="entry name" value="RRM"/>
    <property type="match status" value="2"/>
</dbReference>
<proteinExistence type="evidence at protein level"/>
<reference key="1">
    <citation type="journal article" date="1998" name="Science">
        <title>Genome sequence of the nematode C. elegans: a platform for investigating biology.</title>
        <authorList>
            <consortium name="The C. elegans sequencing consortium"/>
        </authorList>
    </citation>
    <scope>NUCLEOTIDE SEQUENCE [LARGE SCALE GENOMIC DNA]</scope>
    <source>
        <strain evidence="8">Bristol N2</strain>
    </source>
</reference>
<reference key="2">
    <citation type="journal article" date="2020" name="Elife">
        <title>Evolutionarily conserved regulation of immunity by the splicing factor RNP-6/PUF60.</title>
        <authorList>
            <person name="Kew C."/>
            <person name="Huang W."/>
            <person name="Fischer J."/>
            <person name="Ganesan R."/>
            <person name="Robinson N."/>
            <person name="Antebi A."/>
        </authorList>
    </citation>
    <scope>FUNCTION</scope>
    <scope>SUBCELLULAR LOCATION</scope>
    <scope>DISRUPTION PHENOTYPE</scope>
    <scope>MUTAGENESIS OF GLY-281</scope>
</reference>
<evidence type="ECO:0000250" key="1">
    <source>
        <dbReference type="UniProtKB" id="Q8T6B9"/>
    </source>
</evidence>
<evidence type="ECO:0000250" key="2">
    <source>
        <dbReference type="UniProtKB" id="Q9UHX1"/>
    </source>
</evidence>
<evidence type="ECO:0000255" key="3">
    <source>
        <dbReference type="PROSITE-ProRule" id="PRU00176"/>
    </source>
</evidence>
<evidence type="ECO:0000256" key="4">
    <source>
        <dbReference type="SAM" id="MobiDB-lite"/>
    </source>
</evidence>
<evidence type="ECO:0000269" key="5">
    <source>
    </source>
</evidence>
<evidence type="ECO:0000305" key="6"/>
<evidence type="ECO:0000305" key="7">
    <source>
    </source>
</evidence>
<evidence type="ECO:0000312" key="8">
    <source>
        <dbReference type="Proteomes" id="UP000001940"/>
    </source>
</evidence>
<evidence type="ECO:0000312" key="9">
    <source>
        <dbReference type="WormBase" id="Y47G6A.20a"/>
    </source>
</evidence>
<evidence type="ECO:0000312" key="10">
    <source>
        <dbReference type="WormBase" id="Y47G6A.20b"/>
    </source>
</evidence>
<evidence type="ECO:0000312" key="11">
    <source>
        <dbReference type="WormBase" id="Y47G6A.20c"/>
    </source>
</evidence>
<protein>
    <recommendedName>
        <fullName evidence="2">Poly(U)-binding-splicing factor rnp-6</fullName>
    </recommendedName>
    <alternativeName>
        <fullName evidence="2">60 kDa poly(U)-binding-splicing factor rnp-6</fullName>
    </alternativeName>
</protein>
<feature type="chain" id="PRO_0000451762" description="Poly(U)-binding-splicing factor rnp-6">
    <location>
        <begin position="1"/>
        <end position="749"/>
    </location>
</feature>
<feature type="domain" description="RRM 1" evidence="3">
    <location>
        <begin position="102"/>
        <end position="176"/>
    </location>
</feature>
<feature type="domain" description="RRM 2" evidence="3">
    <location>
        <begin position="207"/>
        <end position="285"/>
    </location>
</feature>
<feature type="domain" description="RRM 3; atypical" evidence="3">
    <location>
        <begin position="658"/>
        <end position="739"/>
    </location>
</feature>
<feature type="region of interest" description="Disordered" evidence="4">
    <location>
        <begin position="323"/>
        <end position="388"/>
    </location>
</feature>
<feature type="region of interest" description="Disordered" evidence="4">
    <location>
        <begin position="457"/>
        <end position="480"/>
    </location>
</feature>
<feature type="compositionally biased region" description="Low complexity" evidence="4">
    <location>
        <begin position="330"/>
        <end position="354"/>
    </location>
</feature>
<feature type="splice variant" id="VSP_060861" description="In isoform c." evidence="6">
    <original>VGKCVTPPDALTYLQPASVSAIPASVSVACAAITAKVMAAEAAAGSSPKTPSESGGSRAASPAPRAQ</original>
    <variation>NFTTFGLYHHQRRQMCNSTGCSYLSSTGIRQCNSSKCISCVCSNYRKSDGCRSSSRFLTGRCNKPVL</variation>
    <location>
        <begin position="280"/>
        <end position="346"/>
    </location>
</feature>
<feature type="splice variant" id="VSP_060862" description="In isoform a." evidence="6">
    <original>KTPSESGGSRAA</original>
    <variation>VGATNLFSNSPR</variation>
    <location>
        <begin position="328"/>
        <end position="339"/>
    </location>
</feature>
<feature type="splice variant" id="VSP_060863" description="In isoform a." evidence="6">
    <location>
        <begin position="340"/>
        <end position="749"/>
    </location>
</feature>
<feature type="splice variant" id="VSP_060864" description="In isoform c." evidence="6">
    <location>
        <begin position="347"/>
        <end position="749"/>
    </location>
</feature>
<feature type="mutagenesis site" description="In dh1127; reduces brood size, there is a developmental delay in reaching adulthood and results in a shorter body size. Does not affect pharyngeal pumping rate. Resistant to heat and oxidative stress. Increased sensitivity to pathogenic bacteria such as S.aureus, E.faecalis and P.aeruginosa at both 20 and 25 degrees Celsius. Splicing defects of genes such as prg-2, gyg-1 and tos-1 upon infection by S.aureus. Reduces expression of nlp-34, M01G12.9 and cyp-37B1 following S.aureus infection. Increases expression of lys-3, irg-2, irg-1 and fmo-2 under non-infected conditions." evidence="5">
    <original>G</original>
    <variation>D</variation>
    <location>
        <position position="281"/>
    </location>
</feature>
<accession>Q9N3S4</accession>
<accession>Q8MXS9</accession>
<accession>Q9N3S3</accession>
<organism evidence="8">
    <name type="scientific">Caenorhabditis elegans</name>
    <dbReference type="NCBI Taxonomy" id="6239"/>
    <lineage>
        <taxon>Eukaryota</taxon>
        <taxon>Metazoa</taxon>
        <taxon>Ecdysozoa</taxon>
        <taxon>Nematoda</taxon>
        <taxon>Chromadorea</taxon>
        <taxon>Rhabditida</taxon>
        <taxon>Rhabditina</taxon>
        <taxon>Rhabditomorpha</taxon>
        <taxon>Rhabditoidea</taxon>
        <taxon>Rhabditidae</taxon>
        <taxon>Peloderinae</taxon>
        <taxon>Caenorhabditis</taxon>
    </lineage>
</organism>